<evidence type="ECO:0000255" key="1">
    <source>
        <dbReference type="HAMAP-Rule" id="MF_00376"/>
    </source>
</evidence>
<evidence type="ECO:0000256" key="2">
    <source>
        <dbReference type="SAM" id="MobiDB-lite"/>
    </source>
</evidence>
<dbReference type="EC" id="2.7.1.24" evidence="1"/>
<dbReference type="EMBL" id="CP000323">
    <property type="protein sequence ID" value="ABE73850.1"/>
    <property type="molecule type" value="Genomic_DNA"/>
</dbReference>
<dbReference type="RefSeq" id="WP_011512441.1">
    <property type="nucleotide sequence ID" value="NC_007969.1"/>
</dbReference>
<dbReference type="SMR" id="Q1QEQ3"/>
<dbReference type="STRING" id="335284.Pcryo_0066"/>
<dbReference type="KEGG" id="pcr:Pcryo_0066"/>
<dbReference type="eggNOG" id="COG0237">
    <property type="taxonomic scope" value="Bacteria"/>
</dbReference>
<dbReference type="HOGENOM" id="CLU_057180_1_2_6"/>
<dbReference type="UniPathway" id="UPA00241">
    <property type="reaction ID" value="UER00356"/>
</dbReference>
<dbReference type="Proteomes" id="UP000002425">
    <property type="component" value="Chromosome"/>
</dbReference>
<dbReference type="GO" id="GO:0005737">
    <property type="term" value="C:cytoplasm"/>
    <property type="evidence" value="ECO:0007669"/>
    <property type="project" value="UniProtKB-SubCell"/>
</dbReference>
<dbReference type="GO" id="GO:0005524">
    <property type="term" value="F:ATP binding"/>
    <property type="evidence" value="ECO:0007669"/>
    <property type="project" value="UniProtKB-UniRule"/>
</dbReference>
<dbReference type="GO" id="GO:0004140">
    <property type="term" value="F:dephospho-CoA kinase activity"/>
    <property type="evidence" value="ECO:0007669"/>
    <property type="project" value="UniProtKB-UniRule"/>
</dbReference>
<dbReference type="GO" id="GO:0015937">
    <property type="term" value="P:coenzyme A biosynthetic process"/>
    <property type="evidence" value="ECO:0007669"/>
    <property type="project" value="UniProtKB-UniRule"/>
</dbReference>
<dbReference type="CDD" id="cd02022">
    <property type="entry name" value="DPCK"/>
    <property type="match status" value="1"/>
</dbReference>
<dbReference type="Gene3D" id="3.40.50.300">
    <property type="entry name" value="P-loop containing nucleotide triphosphate hydrolases"/>
    <property type="match status" value="1"/>
</dbReference>
<dbReference type="HAMAP" id="MF_00376">
    <property type="entry name" value="Dephospho_CoA_kinase"/>
    <property type="match status" value="1"/>
</dbReference>
<dbReference type="InterPro" id="IPR001977">
    <property type="entry name" value="Depp_CoAkinase"/>
</dbReference>
<dbReference type="InterPro" id="IPR027417">
    <property type="entry name" value="P-loop_NTPase"/>
</dbReference>
<dbReference type="NCBIfam" id="TIGR00152">
    <property type="entry name" value="dephospho-CoA kinase"/>
    <property type="match status" value="1"/>
</dbReference>
<dbReference type="PANTHER" id="PTHR10695:SF46">
    <property type="entry name" value="BIFUNCTIONAL COENZYME A SYNTHASE-RELATED"/>
    <property type="match status" value="1"/>
</dbReference>
<dbReference type="PANTHER" id="PTHR10695">
    <property type="entry name" value="DEPHOSPHO-COA KINASE-RELATED"/>
    <property type="match status" value="1"/>
</dbReference>
<dbReference type="Pfam" id="PF01121">
    <property type="entry name" value="CoaE"/>
    <property type="match status" value="1"/>
</dbReference>
<dbReference type="SUPFAM" id="SSF52540">
    <property type="entry name" value="P-loop containing nucleoside triphosphate hydrolases"/>
    <property type="match status" value="1"/>
</dbReference>
<dbReference type="PROSITE" id="PS51219">
    <property type="entry name" value="DPCK"/>
    <property type="match status" value="1"/>
</dbReference>
<proteinExistence type="inferred from homology"/>
<name>COAE_PSYCK</name>
<sequence length="230" mass="25124">MSKYAAAPSPYSHQPQTPEHKSKTLVVGLTGGIGSGKSAASDWFAQQGIDIIDADVIAHEVVVKGSSTLRKIQRKFGDWVLNANGDMDRAAVRTHVFTYPDALIELEAITHPAIREAAKKQLAESTSPYVVLSAPLLIEAAEAGLANLCQRILVMDATENTQLARASQRDALSVQKIEAIMVNQLSREERNRHADDVVLNESDLAALYVQLEPLHQDYLKLAQQLKFAAD</sequence>
<comment type="function">
    <text evidence="1">Catalyzes the phosphorylation of the 3'-hydroxyl group of dephosphocoenzyme A to form coenzyme A.</text>
</comment>
<comment type="catalytic activity">
    <reaction evidence="1">
        <text>3'-dephospho-CoA + ATP = ADP + CoA + H(+)</text>
        <dbReference type="Rhea" id="RHEA:18245"/>
        <dbReference type="ChEBI" id="CHEBI:15378"/>
        <dbReference type="ChEBI" id="CHEBI:30616"/>
        <dbReference type="ChEBI" id="CHEBI:57287"/>
        <dbReference type="ChEBI" id="CHEBI:57328"/>
        <dbReference type="ChEBI" id="CHEBI:456216"/>
        <dbReference type="EC" id="2.7.1.24"/>
    </reaction>
</comment>
<comment type="pathway">
    <text evidence="1">Cofactor biosynthesis; coenzyme A biosynthesis; CoA from (R)-pantothenate: step 5/5.</text>
</comment>
<comment type="subcellular location">
    <subcellularLocation>
        <location evidence="1">Cytoplasm</location>
    </subcellularLocation>
</comment>
<comment type="similarity">
    <text evidence="1">Belongs to the CoaE family.</text>
</comment>
<reference key="1">
    <citation type="submission" date="2006-03" db="EMBL/GenBank/DDBJ databases">
        <title>Complete sequence of chromosome of Psychrobacter cryohalolentis K5.</title>
        <authorList>
            <consortium name="US DOE Joint Genome Institute"/>
            <person name="Copeland A."/>
            <person name="Lucas S."/>
            <person name="Lapidus A."/>
            <person name="Barry K."/>
            <person name="Detter J.C."/>
            <person name="Glavina T."/>
            <person name="Hammon N."/>
            <person name="Israni S."/>
            <person name="Dalin E."/>
            <person name="Tice H."/>
            <person name="Pitluck S."/>
            <person name="Brettin T."/>
            <person name="Bruce D."/>
            <person name="Han C."/>
            <person name="Tapia R."/>
            <person name="Sims D.R."/>
            <person name="Gilna P."/>
            <person name="Schmutz J."/>
            <person name="Larimer F."/>
            <person name="Land M."/>
            <person name="Hauser L."/>
            <person name="Kyrpides N."/>
            <person name="Kim E."/>
            <person name="Richardson P."/>
        </authorList>
    </citation>
    <scope>NUCLEOTIDE SEQUENCE [LARGE SCALE GENOMIC DNA]</scope>
    <source>
        <strain>ATCC BAA-1226 / DSM 17306 / VKM B-2378 / K5</strain>
    </source>
</reference>
<gene>
    <name evidence="1" type="primary">coaE</name>
    <name type="ordered locus">Pcryo_0066</name>
</gene>
<keyword id="KW-0067">ATP-binding</keyword>
<keyword id="KW-0173">Coenzyme A biosynthesis</keyword>
<keyword id="KW-0963">Cytoplasm</keyword>
<keyword id="KW-0418">Kinase</keyword>
<keyword id="KW-0547">Nucleotide-binding</keyword>
<keyword id="KW-0808">Transferase</keyword>
<protein>
    <recommendedName>
        <fullName evidence="1">Dephospho-CoA kinase</fullName>
        <ecNumber evidence="1">2.7.1.24</ecNumber>
    </recommendedName>
    <alternativeName>
        <fullName evidence="1">Dephosphocoenzyme A kinase</fullName>
    </alternativeName>
</protein>
<feature type="chain" id="PRO_0000243324" description="Dephospho-CoA kinase">
    <location>
        <begin position="1"/>
        <end position="230"/>
    </location>
</feature>
<feature type="domain" description="DPCK" evidence="1">
    <location>
        <begin position="26"/>
        <end position="225"/>
    </location>
</feature>
<feature type="region of interest" description="Disordered" evidence="2">
    <location>
        <begin position="1"/>
        <end position="21"/>
    </location>
</feature>
<feature type="binding site" evidence="1">
    <location>
        <begin position="34"/>
        <end position="39"/>
    </location>
    <ligand>
        <name>ATP</name>
        <dbReference type="ChEBI" id="CHEBI:30616"/>
    </ligand>
</feature>
<organism>
    <name type="scientific">Psychrobacter cryohalolentis (strain ATCC BAA-1226 / DSM 17306 / VKM B-2378 / K5)</name>
    <dbReference type="NCBI Taxonomy" id="335284"/>
    <lineage>
        <taxon>Bacteria</taxon>
        <taxon>Pseudomonadati</taxon>
        <taxon>Pseudomonadota</taxon>
        <taxon>Gammaproteobacteria</taxon>
        <taxon>Moraxellales</taxon>
        <taxon>Moraxellaceae</taxon>
        <taxon>Psychrobacter</taxon>
    </lineage>
</organism>
<accession>Q1QEQ3</accession>